<sequence length="171" mass="19430">MPLLDSFTVDHTRMEAPAVRVAKTMNTPHGDAITVFDLRFCVPNKEVMPERGIHTLEHLFAGFMRNHLNGNGVEIIDISPMGCRTGFYMSLIGTPDEQRVADAWKAAMEDVLKVQDQNQIPELNVYQCGTYQMHSLQEAQDIARSILEREVRINSNEELALPKEKLQELHI</sequence>
<dbReference type="EC" id="4.4.1.21" evidence="1"/>
<dbReference type="EMBL" id="AE005674">
    <property type="protein sequence ID" value="AAN44206.1"/>
    <property type="molecule type" value="Genomic_DNA"/>
</dbReference>
<dbReference type="EMBL" id="AE014073">
    <property type="protein sequence ID" value="AAP18033.1"/>
    <property type="molecule type" value="Genomic_DNA"/>
</dbReference>
<dbReference type="RefSeq" id="WP_001130212.1">
    <property type="nucleotide sequence ID" value="NZ_WPGW01000014.1"/>
</dbReference>
<dbReference type="SMR" id="Q83JZ4"/>
<dbReference type="STRING" id="198214.SF2714"/>
<dbReference type="PaxDb" id="198214-SF2714"/>
<dbReference type="KEGG" id="sfl:SF2714"/>
<dbReference type="KEGG" id="sfx:S2901"/>
<dbReference type="PATRIC" id="fig|198214.7.peg.3233"/>
<dbReference type="HOGENOM" id="CLU_107531_2_0_6"/>
<dbReference type="BRENDA" id="4.4.1.21">
    <property type="organism ID" value="5712"/>
</dbReference>
<dbReference type="Proteomes" id="UP000001006">
    <property type="component" value="Chromosome"/>
</dbReference>
<dbReference type="Proteomes" id="UP000002673">
    <property type="component" value="Chromosome"/>
</dbReference>
<dbReference type="GO" id="GO:0005506">
    <property type="term" value="F:iron ion binding"/>
    <property type="evidence" value="ECO:0007669"/>
    <property type="project" value="InterPro"/>
</dbReference>
<dbReference type="GO" id="GO:0043768">
    <property type="term" value="F:S-ribosylhomocysteine lyase activity"/>
    <property type="evidence" value="ECO:0007669"/>
    <property type="project" value="UniProtKB-UniRule"/>
</dbReference>
<dbReference type="GO" id="GO:0009372">
    <property type="term" value="P:quorum sensing"/>
    <property type="evidence" value="ECO:0007669"/>
    <property type="project" value="UniProtKB-UniRule"/>
</dbReference>
<dbReference type="FunFam" id="3.30.1360.80:FF:000001">
    <property type="entry name" value="S-ribosylhomocysteine lyase"/>
    <property type="match status" value="1"/>
</dbReference>
<dbReference type="Gene3D" id="3.30.1360.80">
    <property type="entry name" value="S-ribosylhomocysteinase (LuxS)"/>
    <property type="match status" value="1"/>
</dbReference>
<dbReference type="HAMAP" id="MF_00091">
    <property type="entry name" value="LuxS"/>
    <property type="match status" value="1"/>
</dbReference>
<dbReference type="InterPro" id="IPR037005">
    <property type="entry name" value="LuxS_sf"/>
</dbReference>
<dbReference type="InterPro" id="IPR011249">
    <property type="entry name" value="Metalloenz_LuxS/M16"/>
</dbReference>
<dbReference type="InterPro" id="IPR003815">
    <property type="entry name" value="S-ribosylhomocysteinase"/>
</dbReference>
<dbReference type="NCBIfam" id="NF002602">
    <property type="entry name" value="PRK02260.1-2"/>
    <property type="match status" value="1"/>
</dbReference>
<dbReference type="PANTHER" id="PTHR35799">
    <property type="entry name" value="S-RIBOSYLHOMOCYSTEINE LYASE"/>
    <property type="match status" value="1"/>
</dbReference>
<dbReference type="PANTHER" id="PTHR35799:SF1">
    <property type="entry name" value="S-RIBOSYLHOMOCYSTEINE LYASE"/>
    <property type="match status" value="1"/>
</dbReference>
<dbReference type="Pfam" id="PF02664">
    <property type="entry name" value="LuxS"/>
    <property type="match status" value="1"/>
</dbReference>
<dbReference type="PIRSF" id="PIRSF006160">
    <property type="entry name" value="AI2"/>
    <property type="match status" value="1"/>
</dbReference>
<dbReference type="PRINTS" id="PR01487">
    <property type="entry name" value="LUXSPROTEIN"/>
</dbReference>
<dbReference type="SUPFAM" id="SSF63411">
    <property type="entry name" value="LuxS/MPP-like metallohydrolase"/>
    <property type="match status" value="1"/>
</dbReference>
<organism>
    <name type="scientific">Shigella flexneri</name>
    <dbReference type="NCBI Taxonomy" id="623"/>
    <lineage>
        <taxon>Bacteria</taxon>
        <taxon>Pseudomonadati</taxon>
        <taxon>Pseudomonadota</taxon>
        <taxon>Gammaproteobacteria</taxon>
        <taxon>Enterobacterales</taxon>
        <taxon>Enterobacteriaceae</taxon>
        <taxon>Shigella</taxon>
    </lineage>
</organism>
<feature type="chain" id="PRO_0000172252" description="S-ribosylhomocysteine lyase">
    <location>
        <begin position="1"/>
        <end position="171"/>
    </location>
</feature>
<feature type="binding site" evidence="1">
    <location>
        <position position="54"/>
    </location>
    <ligand>
        <name>Fe cation</name>
        <dbReference type="ChEBI" id="CHEBI:24875"/>
    </ligand>
</feature>
<feature type="binding site" evidence="1">
    <location>
        <position position="58"/>
    </location>
    <ligand>
        <name>Fe cation</name>
        <dbReference type="ChEBI" id="CHEBI:24875"/>
    </ligand>
</feature>
<feature type="binding site" evidence="1">
    <location>
        <position position="128"/>
    </location>
    <ligand>
        <name>Fe cation</name>
        <dbReference type="ChEBI" id="CHEBI:24875"/>
    </ligand>
</feature>
<protein>
    <recommendedName>
        <fullName evidence="1">S-ribosylhomocysteine lyase</fullName>
        <ecNumber evidence="1">4.4.1.21</ecNumber>
    </recommendedName>
    <alternativeName>
        <fullName evidence="1">AI-2 synthesis protein</fullName>
    </alternativeName>
    <alternativeName>
        <fullName evidence="1">Autoinducer-2 production protein LuxS</fullName>
    </alternativeName>
</protein>
<gene>
    <name evidence="1" type="primary">luxS</name>
    <name type="ordered locus">SF2714</name>
    <name type="ordered locus">S2901</name>
</gene>
<proteinExistence type="inferred from homology"/>
<comment type="function">
    <text evidence="1">Involved in the synthesis of autoinducer 2 (AI-2) which is secreted by bacteria and is used to communicate both the cell density and the metabolic potential of the environment. The regulation of gene expression in response to changes in cell density is called quorum sensing. Catalyzes the transformation of S-ribosylhomocysteine (RHC) to homocysteine (HC) and 4,5-dihydroxy-2,3-pentadione (DPD).</text>
</comment>
<comment type="catalytic activity">
    <reaction evidence="1">
        <text>S-(5-deoxy-D-ribos-5-yl)-L-homocysteine = (S)-4,5-dihydroxypentane-2,3-dione + L-homocysteine</text>
        <dbReference type="Rhea" id="RHEA:17753"/>
        <dbReference type="ChEBI" id="CHEBI:29484"/>
        <dbReference type="ChEBI" id="CHEBI:58195"/>
        <dbReference type="ChEBI" id="CHEBI:58199"/>
        <dbReference type="EC" id="4.4.1.21"/>
    </reaction>
</comment>
<comment type="cofactor">
    <cofactor evidence="1">
        <name>Fe cation</name>
        <dbReference type="ChEBI" id="CHEBI:24875"/>
    </cofactor>
    <text evidence="1">Binds 1 Fe cation per subunit.</text>
</comment>
<comment type="subunit">
    <text evidence="1">Homodimer.</text>
</comment>
<comment type="similarity">
    <text evidence="1">Belongs to the LuxS family.</text>
</comment>
<accession>Q83JZ4</accession>
<evidence type="ECO:0000255" key="1">
    <source>
        <dbReference type="HAMAP-Rule" id="MF_00091"/>
    </source>
</evidence>
<keyword id="KW-0071">Autoinducer synthesis</keyword>
<keyword id="KW-0408">Iron</keyword>
<keyword id="KW-0456">Lyase</keyword>
<keyword id="KW-0479">Metal-binding</keyword>
<keyword id="KW-0673">Quorum sensing</keyword>
<keyword id="KW-1185">Reference proteome</keyword>
<reference key="1">
    <citation type="journal article" date="2002" name="Nucleic Acids Res.">
        <title>Genome sequence of Shigella flexneri 2a: insights into pathogenicity through comparison with genomes of Escherichia coli K12 and O157.</title>
        <authorList>
            <person name="Jin Q."/>
            <person name="Yuan Z."/>
            <person name="Xu J."/>
            <person name="Wang Y."/>
            <person name="Shen Y."/>
            <person name="Lu W."/>
            <person name="Wang J."/>
            <person name="Liu H."/>
            <person name="Yang J."/>
            <person name="Yang F."/>
            <person name="Zhang X."/>
            <person name="Zhang J."/>
            <person name="Yang G."/>
            <person name="Wu H."/>
            <person name="Qu D."/>
            <person name="Dong J."/>
            <person name="Sun L."/>
            <person name="Xue Y."/>
            <person name="Zhao A."/>
            <person name="Gao Y."/>
            <person name="Zhu J."/>
            <person name="Kan B."/>
            <person name="Ding K."/>
            <person name="Chen S."/>
            <person name="Cheng H."/>
            <person name="Yao Z."/>
            <person name="He B."/>
            <person name="Chen R."/>
            <person name="Ma D."/>
            <person name="Qiang B."/>
            <person name="Wen Y."/>
            <person name="Hou Y."/>
            <person name="Yu J."/>
        </authorList>
    </citation>
    <scope>NUCLEOTIDE SEQUENCE [LARGE SCALE GENOMIC DNA]</scope>
    <source>
        <strain>301 / Serotype 2a</strain>
    </source>
</reference>
<reference key="2">
    <citation type="journal article" date="2003" name="Infect. Immun.">
        <title>Complete genome sequence and comparative genomics of Shigella flexneri serotype 2a strain 2457T.</title>
        <authorList>
            <person name="Wei J."/>
            <person name="Goldberg M.B."/>
            <person name="Burland V."/>
            <person name="Venkatesan M.M."/>
            <person name="Deng W."/>
            <person name="Fournier G."/>
            <person name="Mayhew G.F."/>
            <person name="Plunkett G. III"/>
            <person name="Rose D.J."/>
            <person name="Darling A."/>
            <person name="Mau B."/>
            <person name="Perna N.T."/>
            <person name="Payne S.M."/>
            <person name="Runyen-Janecky L.J."/>
            <person name="Zhou S."/>
            <person name="Schwartz D.C."/>
            <person name="Blattner F.R."/>
        </authorList>
    </citation>
    <scope>NUCLEOTIDE SEQUENCE [LARGE SCALE GENOMIC DNA]</scope>
    <source>
        <strain>ATCC 700930 / 2457T / Serotype 2a</strain>
    </source>
</reference>
<name>LUXS_SHIFL</name>